<feature type="signal peptide" evidence="1">
    <location>
        <begin position="1"/>
        <end position="16"/>
    </location>
</feature>
<feature type="chain" id="PRO_1000136551" description="UPF0257 lipoprotein YnfC">
    <location>
        <begin position="17"/>
        <end position="236"/>
    </location>
</feature>
<feature type="lipid moiety-binding region" description="N-palmitoyl cysteine" evidence="1">
    <location>
        <position position="17"/>
    </location>
</feature>
<feature type="lipid moiety-binding region" description="S-diacylglycerol cysteine" evidence="1">
    <location>
        <position position="17"/>
    </location>
</feature>
<keyword id="KW-1003">Cell membrane</keyword>
<keyword id="KW-0449">Lipoprotein</keyword>
<keyword id="KW-0472">Membrane</keyword>
<keyword id="KW-0564">Palmitate</keyword>
<keyword id="KW-1185">Reference proteome</keyword>
<keyword id="KW-0732">Signal</keyword>
<accession>B7M9T8</accession>
<name>YNFC_ECO45</name>
<proteinExistence type="inferred from homology"/>
<evidence type="ECO:0000255" key="1">
    <source>
        <dbReference type="HAMAP-Rule" id="MF_01065"/>
    </source>
</evidence>
<organism>
    <name type="scientific">Escherichia coli O45:K1 (strain S88 / ExPEC)</name>
    <dbReference type="NCBI Taxonomy" id="585035"/>
    <lineage>
        <taxon>Bacteria</taxon>
        <taxon>Pseudomonadati</taxon>
        <taxon>Pseudomonadota</taxon>
        <taxon>Gammaproteobacteria</taxon>
        <taxon>Enterobacterales</taxon>
        <taxon>Enterobacteriaceae</taxon>
        <taxon>Escherichia</taxon>
    </lineage>
</organism>
<gene>
    <name evidence="1" type="primary">ynfC</name>
    <name type="ordered locus">ECS88_1630</name>
</gene>
<reference key="1">
    <citation type="journal article" date="2009" name="PLoS Genet.">
        <title>Organised genome dynamics in the Escherichia coli species results in highly diverse adaptive paths.</title>
        <authorList>
            <person name="Touchon M."/>
            <person name="Hoede C."/>
            <person name="Tenaillon O."/>
            <person name="Barbe V."/>
            <person name="Baeriswyl S."/>
            <person name="Bidet P."/>
            <person name="Bingen E."/>
            <person name="Bonacorsi S."/>
            <person name="Bouchier C."/>
            <person name="Bouvet O."/>
            <person name="Calteau A."/>
            <person name="Chiapello H."/>
            <person name="Clermont O."/>
            <person name="Cruveiller S."/>
            <person name="Danchin A."/>
            <person name="Diard M."/>
            <person name="Dossat C."/>
            <person name="Karoui M.E."/>
            <person name="Frapy E."/>
            <person name="Garry L."/>
            <person name="Ghigo J.M."/>
            <person name="Gilles A.M."/>
            <person name="Johnson J."/>
            <person name="Le Bouguenec C."/>
            <person name="Lescat M."/>
            <person name="Mangenot S."/>
            <person name="Martinez-Jehanne V."/>
            <person name="Matic I."/>
            <person name="Nassif X."/>
            <person name="Oztas S."/>
            <person name="Petit M.A."/>
            <person name="Pichon C."/>
            <person name="Rouy Z."/>
            <person name="Ruf C.S."/>
            <person name="Schneider D."/>
            <person name="Tourret J."/>
            <person name="Vacherie B."/>
            <person name="Vallenet D."/>
            <person name="Medigue C."/>
            <person name="Rocha E.P.C."/>
            <person name="Denamur E."/>
        </authorList>
    </citation>
    <scope>NUCLEOTIDE SEQUENCE [LARGE SCALE GENOMIC DNA]</scope>
    <source>
        <strain>S88 / ExPEC</strain>
    </source>
</reference>
<dbReference type="EMBL" id="CU928161">
    <property type="protein sequence ID" value="CAR02945.1"/>
    <property type="molecule type" value="Genomic_DNA"/>
</dbReference>
<dbReference type="RefSeq" id="WP_001296084.1">
    <property type="nucleotide sequence ID" value="NC_011742.1"/>
</dbReference>
<dbReference type="SMR" id="B7M9T8"/>
<dbReference type="KEGG" id="ecz:ECS88_1630"/>
<dbReference type="HOGENOM" id="CLU_1174761_0_0_6"/>
<dbReference type="Proteomes" id="UP000000747">
    <property type="component" value="Chromosome"/>
</dbReference>
<dbReference type="GO" id="GO:0005886">
    <property type="term" value="C:plasma membrane"/>
    <property type="evidence" value="ECO:0007669"/>
    <property type="project" value="UniProtKB-SubCell"/>
</dbReference>
<dbReference type="HAMAP" id="MF_01065">
    <property type="entry name" value="UPF0257"/>
    <property type="match status" value="1"/>
</dbReference>
<dbReference type="InterPro" id="IPR010646">
    <property type="entry name" value="UPF0257"/>
</dbReference>
<dbReference type="NCBIfam" id="NF002798">
    <property type="entry name" value="PRK02939.1"/>
    <property type="match status" value="1"/>
</dbReference>
<dbReference type="Pfam" id="PF06788">
    <property type="entry name" value="UPF0257"/>
    <property type="match status" value="1"/>
</dbReference>
<dbReference type="PROSITE" id="PS51257">
    <property type="entry name" value="PROKAR_LIPOPROTEIN"/>
    <property type="match status" value="1"/>
</dbReference>
<sequence length="236" mass="26514">MKYKLLPCLLAILLTGCDRTEVTLSFTPEMASFSNEFDFDPLRGPVKDFTQTLMDEQGEVTKRVSGTLSEEGCFDSLELLDLENNTLVALVLDANYYRDAETLEKRVRLQGKCQLAELPSAGVSWETDDNGFVIKASSKQMQMEYRYDDQGYPLGKTTKSNDKTLSVSATPSTDPIKKLDYTAVTLLNNQRVGNVKQSCEYDNHANPVDCQLIIVDEGVKPAVERVYTIKNTIDYY</sequence>
<comment type="subcellular location">
    <subcellularLocation>
        <location evidence="1">Cell membrane</location>
        <topology evidence="1">Lipid-anchor</topology>
    </subcellularLocation>
</comment>
<comment type="similarity">
    <text evidence="1">Belongs to the UPF0257 family.</text>
</comment>
<protein>
    <recommendedName>
        <fullName evidence="1">UPF0257 lipoprotein YnfC</fullName>
    </recommendedName>
</protein>